<protein>
    <recommendedName>
        <fullName evidence="1">Thiazole synthase 1</fullName>
        <ecNumber evidence="1">2.8.1.10</ecNumber>
    </recommendedName>
</protein>
<keyword id="KW-0963">Cytoplasm</keyword>
<keyword id="KW-1185">Reference proteome</keyword>
<keyword id="KW-0704">Schiff base</keyword>
<keyword id="KW-0784">Thiamine biosynthesis</keyword>
<keyword id="KW-0808">Transferase</keyword>
<proteinExistence type="inferred from homology"/>
<evidence type="ECO:0000255" key="1">
    <source>
        <dbReference type="HAMAP-Rule" id="MF_00443"/>
    </source>
</evidence>
<gene>
    <name evidence="1" type="primary">thiG1</name>
    <name type="ordered locus">Pcar_0339</name>
</gene>
<organism>
    <name type="scientific">Syntrophotalea carbinolica (strain DSM 2380 / NBRC 103641 / GraBd1)</name>
    <name type="common">Pelobacter carbinolicus</name>
    <dbReference type="NCBI Taxonomy" id="338963"/>
    <lineage>
        <taxon>Bacteria</taxon>
        <taxon>Pseudomonadati</taxon>
        <taxon>Thermodesulfobacteriota</taxon>
        <taxon>Desulfuromonadia</taxon>
        <taxon>Desulfuromonadales</taxon>
        <taxon>Syntrophotaleaceae</taxon>
        <taxon>Syntrophotalea</taxon>
    </lineage>
</organism>
<dbReference type="EC" id="2.8.1.10" evidence="1"/>
<dbReference type="EMBL" id="CP000142">
    <property type="protein sequence ID" value="ABA87599.1"/>
    <property type="molecule type" value="Genomic_DNA"/>
</dbReference>
<dbReference type="RefSeq" id="WP_011340017.1">
    <property type="nucleotide sequence ID" value="NC_007498.2"/>
</dbReference>
<dbReference type="SMR" id="Q3A7P5"/>
<dbReference type="STRING" id="338963.Pcar_0339"/>
<dbReference type="KEGG" id="pca:Pcar_0339"/>
<dbReference type="eggNOG" id="COG2022">
    <property type="taxonomic scope" value="Bacteria"/>
</dbReference>
<dbReference type="HOGENOM" id="CLU_062233_1_0_7"/>
<dbReference type="OrthoDB" id="9805935at2"/>
<dbReference type="UniPathway" id="UPA00060"/>
<dbReference type="Proteomes" id="UP000002534">
    <property type="component" value="Chromosome"/>
</dbReference>
<dbReference type="GO" id="GO:0005737">
    <property type="term" value="C:cytoplasm"/>
    <property type="evidence" value="ECO:0007669"/>
    <property type="project" value="UniProtKB-SubCell"/>
</dbReference>
<dbReference type="GO" id="GO:1990107">
    <property type="term" value="F:thiazole synthase activity"/>
    <property type="evidence" value="ECO:0007669"/>
    <property type="project" value="UniProtKB-EC"/>
</dbReference>
<dbReference type="GO" id="GO:0009229">
    <property type="term" value="P:thiamine diphosphate biosynthetic process"/>
    <property type="evidence" value="ECO:0007669"/>
    <property type="project" value="UniProtKB-UniRule"/>
</dbReference>
<dbReference type="CDD" id="cd04728">
    <property type="entry name" value="ThiG"/>
    <property type="match status" value="1"/>
</dbReference>
<dbReference type="FunFam" id="3.20.20.70:FF:000049">
    <property type="entry name" value="Thiazole synthase"/>
    <property type="match status" value="1"/>
</dbReference>
<dbReference type="Gene3D" id="3.20.20.70">
    <property type="entry name" value="Aldolase class I"/>
    <property type="match status" value="1"/>
</dbReference>
<dbReference type="HAMAP" id="MF_00443">
    <property type="entry name" value="ThiG"/>
    <property type="match status" value="1"/>
</dbReference>
<dbReference type="InterPro" id="IPR013785">
    <property type="entry name" value="Aldolase_TIM"/>
</dbReference>
<dbReference type="InterPro" id="IPR033983">
    <property type="entry name" value="Thiazole_synthase_ThiG"/>
</dbReference>
<dbReference type="InterPro" id="IPR008867">
    <property type="entry name" value="ThiG"/>
</dbReference>
<dbReference type="PANTHER" id="PTHR34266">
    <property type="entry name" value="THIAZOLE SYNTHASE"/>
    <property type="match status" value="1"/>
</dbReference>
<dbReference type="PANTHER" id="PTHR34266:SF2">
    <property type="entry name" value="THIAZOLE SYNTHASE"/>
    <property type="match status" value="1"/>
</dbReference>
<dbReference type="Pfam" id="PF05690">
    <property type="entry name" value="ThiG"/>
    <property type="match status" value="1"/>
</dbReference>
<dbReference type="SUPFAM" id="SSF110399">
    <property type="entry name" value="ThiG-like"/>
    <property type="match status" value="1"/>
</dbReference>
<name>THIG1_SYNC1</name>
<sequence>MDELVIAGRSFSSRLMVGTGKFASNSLMADALAASGSQIVTVALRRVDIDRPEDDLLAHIDRDKYLLLPNTSGARDADEAVRLARLARAAGCEPWVKLEVTPDPYYLLPDPIETLKAAEILVKEGFVVLPYINADPVLAKHLQEAGTATVMPLGAPIGTNKGVRTRDNIAIIIEQAIVPVVVDAGLGAPSHVAEAMEMGADAVLVNTALAVTPDPAGMANAFRLGVEAGRRAFLAGLPAQQQKAEASSPLTGFLRDEQ</sequence>
<reference key="1">
    <citation type="submission" date="2005-10" db="EMBL/GenBank/DDBJ databases">
        <title>Complete sequence of Pelobacter carbinolicus DSM 2380.</title>
        <authorList>
            <person name="Copeland A."/>
            <person name="Lucas S."/>
            <person name="Lapidus A."/>
            <person name="Barry K."/>
            <person name="Detter J.C."/>
            <person name="Glavina T."/>
            <person name="Hammon N."/>
            <person name="Israni S."/>
            <person name="Pitluck S."/>
            <person name="Chertkov O."/>
            <person name="Schmutz J."/>
            <person name="Larimer F."/>
            <person name="Land M."/>
            <person name="Kyrpides N."/>
            <person name="Ivanova N."/>
            <person name="Richardson P."/>
        </authorList>
    </citation>
    <scope>NUCLEOTIDE SEQUENCE [LARGE SCALE GENOMIC DNA]</scope>
    <source>
        <strain>DSM 2380 / NBRC 103641 / GraBd1</strain>
    </source>
</reference>
<feature type="chain" id="PRO_0000236351" description="Thiazole synthase 1">
    <location>
        <begin position="1"/>
        <end position="258"/>
    </location>
</feature>
<feature type="active site" description="Schiff-base intermediate with DXP" evidence="1">
    <location>
        <position position="97"/>
    </location>
</feature>
<feature type="binding site" evidence="1">
    <location>
        <position position="158"/>
    </location>
    <ligand>
        <name>1-deoxy-D-xylulose 5-phosphate</name>
        <dbReference type="ChEBI" id="CHEBI:57792"/>
    </ligand>
</feature>
<feature type="binding site" evidence="1">
    <location>
        <begin position="184"/>
        <end position="185"/>
    </location>
    <ligand>
        <name>1-deoxy-D-xylulose 5-phosphate</name>
        <dbReference type="ChEBI" id="CHEBI:57792"/>
    </ligand>
</feature>
<feature type="binding site" evidence="1">
    <location>
        <begin position="206"/>
        <end position="207"/>
    </location>
    <ligand>
        <name>1-deoxy-D-xylulose 5-phosphate</name>
        <dbReference type="ChEBI" id="CHEBI:57792"/>
    </ligand>
</feature>
<comment type="function">
    <text evidence="1">Catalyzes the rearrangement of 1-deoxy-D-xylulose 5-phosphate (DXP) to produce the thiazole phosphate moiety of thiamine. Sulfur is provided by the thiocarboxylate moiety of the carrier protein ThiS. In vitro, sulfur can be provided by H(2)S.</text>
</comment>
<comment type="catalytic activity">
    <reaction evidence="1">
        <text>[ThiS sulfur-carrier protein]-C-terminal-Gly-aminoethanethioate + 2-iminoacetate + 1-deoxy-D-xylulose 5-phosphate = [ThiS sulfur-carrier protein]-C-terminal Gly-Gly + 2-[(2R,5Z)-2-carboxy-4-methylthiazol-5(2H)-ylidene]ethyl phosphate + 2 H2O + H(+)</text>
        <dbReference type="Rhea" id="RHEA:26297"/>
        <dbReference type="Rhea" id="RHEA-COMP:12909"/>
        <dbReference type="Rhea" id="RHEA-COMP:19908"/>
        <dbReference type="ChEBI" id="CHEBI:15377"/>
        <dbReference type="ChEBI" id="CHEBI:15378"/>
        <dbReference type="ChEBI" id="CHEBI:57792"/>
        <dbReference type="ChEBI" id="CHEBI:62899"/>
        <dbReference type="ChEBI" id="CHEBI:77846"/>
        <dbReference type="ChEBI" id="CHEBI:90778"/>
        <dbReference type="ChEBI" id="CHEBI:232372"/>
        <dbReference type="EC" id="2.8.1.10"/>
    </reaction>
</comment>
<comment type="pathway">
    <text evidence="1">Cofactor biosynthesis; thiamine diphosphate biosynthesis.</text>
</comment>
<comment type="subunit">
    <text evidence="1">Homotetramer. Forms heterodimers with either ThiH or ThiS.</text>
</comment>
<comment type="subcellular location">
    <subcellularLocation>
        <location evidence="1">Cytoplasm</location>
    </subcellularLocation>
</comment>
<comment type="similarity">
    <text evidence="1">Belongs to the ThiG family.</text>
</comment>
<accession>Q3A7P5</accession>